<accession>P75121</accession>
<sequence>MPELTRFQKFFLTPEKFNKFTRVVGFCGVFALIALSLGIYSYVGQGSIVPKVAALFLIALGGFTLLLSFVINFVALYKRSQLIHLVNRQDRTDLWLQKMANNKQFEQFELFEKGPISADILPTFYPATIYNFELVPKQFKVQYKNGQTLNFAKLSAIKRSTSKNEKVACLVAIIDAVSDQHWFLTKSDFPLINTGFYESLTESNRQNNVLLYTEKDASFNFNQLDKEMIKQVLFNPVNVYANFNVYNNTTHTYLMMSVPITFMDTSLRMEEAVGDLELNITRQAGYDAATLDSFHKVVELLKTKLIGDFNNAETTSATETTVVAEVTEPTTNSKRKPVKAKKAKK</sequence>
<feature type="chain" id="PRO_0000210626" description="Uncharacterized protein MG456 homolog">
    <location>
        <begin position="1"/>
        <end position="345"/>
    </location>
</feature>
<feature type="transmembrane region" description="Helical" evidence="1">
    <location>
        <begin position="23"/>
        <end position="43"/>
    </location>
</feature>
<feature type="transmembrane region" description="Helical" evidence="1">
    <location>
        <begin position="56"/>
        <end position="76"/>
    </location>
</feature>
<feature type="region of interest" description="Disordered" evidence="2">
    <location>
        <begin position="326"/>
        <end position="345"/>
    </location>
</feature>
<feature type="compositionally biased region" description="Basic residues" evidence="2">
    <location>
        <begin position="333"/>
        <end position="345"/>
    </location>
</feature>
<protein>
    <recommendedName>
        <fullName>Uncharacterized protein MG456 homolog</fullName>
    </recommendedName>
</protein>
<reference key="1">
    <citation type="journal article" date="1996" name="Nucleic Acids Res.">
        <title>Complete sequence analysis of the genome of the bacterium Mycoplasma pneumoniae.</title>
        <authorList>
            <person name="Himmelreich R."/>
            <person name="Hilbert H."/>
            <person name="Plagens H."/>
            <person name="Pirkl E."/>
            <person name="Li B.-C."/>
            <person name="Herrmann R."/>
        </authorList>
    </citation>
    <scope>NUCLEOTIDE SEQUENCE [LARGE SCALE GENOMIC DNA]</scope>
    <source>
        <strain>ATCC 29342 / M129 / Subtype 1</strain>
    </source>
</reference>
<keyword id="KW-1003">Cell membrane</keyword>
<keyword id="KW-0472">Membrane</keyword>
<keyword id="KW-1185">Reference proteome</keyword>
<keyword id="KW-0812">Transmembrane</keyword>
<keyword id="KW-1133">Transmembrane helix</keyword>
<organism>
    <name type="scientific">Mycoplasma pneumoniae (strain ATCC 29342 / M129 / Subtype 1)</name>
    <name type="common">Mycoplasmoides pneumoniae</name>
    <dbReference type="NCBI Taxonomy" id="272634"/>
    <lineage>
        <taxon>Bacteria</taxon>
        <taxon>Bacillati</taxon>
        <taxon>Mycoplasmatota</taxon>
        <taxon>Mycoplasmoidales</taxon>
        <taxon>Mycoplasmoidaceae</taxon>
        <taxon>Mycoplasmoides</taxon>
    </lineage>
</organism>
<proteinExistence type="predicted"/>
<dbReference type="EMBL" id="U00089">
    <property type="protein sequence ID" value="AAB95820.1"/>
    <property type="molecule type" value="Genomic_DNA"/>
</dbReference>
<dbReference type="PIR" id="S73498">
    <property type="entry name" value="S73498"/>
</dbReference>
<dbReference type="RefSeq" id="NP_110359.1">
    <property type="nucleotide sequence ID" value="NC_000912.1"/>
</dbReference>
<dbReference type="RefSeq" id="WP_010875027.1">
    <property type="nucleotide sequence ID" value="NZ_OU342337.1"/>
</dbReference>
<dbReference type="STRING" id="272634.MPN_670"/>
<dbReference type="EnsemblBacteria" id="AAB95820">
    <property type="protein sequence ID" value="AAB95820"/>
    <property type="gene ID" value="MPN_670"/>
</dbReference>
<dbReference type="KEGG" id="mpn:MPN_670"/>
<dbReference type="PATRIC" id="fig|272634.6.peg.735"/>
<dbReference type="HOGENOM" id="CLU_831109_0_0_14"/>
<dbReference type="OrthoDB" id="9959548at2"/>
<dbReference type="BioCyc" id="MPNE272634:G1GJ3-1073-MONOMER"/>
<dbReference type="Proteomes" id="UP000000808">
    <property type="component" value="Chromosome"/>
</dbReference>
<dbReference type="GO" id="GO:0005886">
    <property type="term" value="C:plasma membrane"/>
    <property type="evidence" value="ECO:0007669"/>
    <property type="project" value="UniProtKB-SubCell"/>
</dbReference>
<name>Y670_MYCPN</name>
<comment type="subcellular location">
    <subcellularLocation>
        <location evidence="3">Cell membrane</location>
        <topology evidence="3">Multi-pass membrane protein</topology>
    </subcellularLocation>
</comment>
<gene>
    <name type="ordered locus">MPN_670</name>
    <name type="ORF">K05_orf345</name>
    <name type="ORF">MP172</name>
</gene>
<evidence type="ECO:0000255" key="1"/>
<evidence type="ECO:0000256" key="2">
    <source>
        <dbReference type="SAM" id="MobiDB-lite"/>
    </source>
</evidence>
<evidence type="ECO:0000305" key="3"/>